<feature type="signal peptide" evidence="2">
    <location>
        <begin position="1"/>
        <end position="21"/>
    </location>
</feature>
<feature type="chain" id="PRO_0000419802" description="Eppin">
    <location>
        <begin position="22"/>
        <end position="134"/>
    </location>
</feature>
<feature type="domain" description="WAP" evidence="4">
    <location>
        <begin position="26"/>
        <end position="73"/>
    </location>
</feature>
<feature type="domain" description="BPTI/Kunitz inhibitor" evidence="3">
    <location>
        <begin position="77"/>
        <end position="127"/>
    </location>
</feature>
<feature type="region of interest" description="Interaction with SEMG1" evidence="1">
    <location>
        <begin position="102"/>
        <end position="133"/>
    </location>
</feature>
<feature type="region of interest" description="Interaction with LTF" evidence="1">
    <location>
        <begin position="117"/>
        <end position="133"/>
    </location>
</feature>
<feature type="disulfide bond" evidence="1">
    <location>
        <begin position="33"/>
        <end position="61"/>
    </location>
</feature>
<feature type="disulfide bond" evidence="1">
    <location>
        <begin position="40"/>
        <end position="65"/>
    </location>
</feature>
<feature type="disulfide bond" evidence="1">
    <location>
        <begin position="48"/>
        <end position="60"/>
    </location>
</feature>
<feature type="disulfide bond" evidence="1">
    <location>
        <begin position="54"/>
        <end position="69"/>
    </location>
</feature>
<feature type="disulfide bond" evidence="1">
    <location>
        <begin position="77"/>
        <end position="127"/>
    </location>
</feature>
<feature type="disulfide bond" evidence="1">
    <location>
        <begin position="86"/>
        <end position="110"/>
    </location>
</feature>
<feature type="disulfide bond" evidence="1">
    <location>
        <begin position="102"/>
        <end position="123"/>
    </location>
</feature>
<protein>
    <recommendedName>
        <fullName>Eppin</fullName>
    </recommendedName>
    <alternativeName>
        <fullName>Epididymal protease inhibitor</fullName>
    </alternativeName>
    <alternativeName>
        <fullName>Serine protease inhibitor-like with Kunitz and WAP domains 1</fullName>
    </alternativeName>
</protein>
<evidence type="ECO:0000250" key="1"/>
<evidence type="ECO:0000255" key="2"/>
<evidence type="ECO:0000255" key="3">
    <source>
        <dbReference type="PROSITE-ProRule" id="PRU00031"/>
    </source>
</evidence>
<evidence type="ECO:0000255" key="4">
    <source>
        <dbReference type="PROSITE-ProRule" id="PRU00722"/>
    </source>
</evidence>
<evidence type="ECO:0000305" key="5"/>
<gene>
    <name type="primary">Eppin</name>
    <name type="synonym">Spinlw1</name>
</gene>
<dbReference type="EMBL" id="AABR06027547">
    <property type="status" value="NOT_ANNOTATED_CDS"/>
    <property type="molecule type" value="Genomic_DNA"/>
</dbReference>
<dbReference type="EMBL" id="CH474005">
    <property type="protein sequence ID" value="EDL96509.1"/>
    <property type="molecule type" value="Genomic_DNA"/>
</dbReference>
<dbReference type="RefSeq" id="NP_001102927.1">
    <property type="nucleotide sequence ID" value="NM_001109457.1"/>
</dbReference>
<dbReference type="SMR" id="D4A2Z2"/>
<dbReference type="FunCoup" id="D4A2Z2">
    <property type="interactions" value="5"/>
</dbReference>
<dbReference type="STRING" id="10116.ENSRNOP00000019829"/>
<dbReference type="MEROPS" id="I02.956"/>
<dbReference type="PaxDb" id="10116-ENSRNOP00000019829"/>
<dbReference type="Ensembl" id="ENSRNOT00000019829.7">
    <property type="protein sequence ID" value="ENSRNOP00000019829.5"/>
    <property type="gene ID" value="ENSRNOG00000028908.5"/>
</dbReference>
<dbReference type="GeneID" id="685161"/>
<dbReference type="KEGG" id="rno:685161"/>
<dbReference type="UCSC" id="RGD:1597722">
    <property type="organism name" value="rat"/>
</dbReference>
<dbReference type="AGR" id="RGD:1597722"/>
<dbReference type="CTD" id="57119"/>
<dbReference type="RGD" id="1597722">
    <property type="gene designation" value="Eppin"/>
</dbReference>
<dbReference type="eggNOG" id="KOG4295">
    <property type="taxonomic scope" value="Eukaryota"/>
</dbReference>
<dbReference type="GeneTree" id="ENSGT00940000156753"/>
<dbReference type="HOGENOM" id="CLU_127181_0_0_1"/>
<dbReference type="InParanoid" id="D4A2Z2"/>
<dbReference type="OMA" id="CCVFNCG"/>
<dbReference type="OrthoDB" id="4473401at2759"/>
<dbReference type="PhylomeDB" id="D4A2Z2"/>
<dbReference type="TreeFam" id="TF342459"/>
<dbReference type="Reactome" id="R-RNO-6803157">
    <property type="pathway name" value="Antimicrobial peptides"/>
</dbReference>
<dbReference type="PRO" id="PR:D4A2Z2"/>
<dbReference type="Proteomes" id="UP000002494">
    <property type="component" value="Chromosome 3"/>
</dbReference>
<dbReference type="Proteomes" id="UP000234681">
    <property type="component" value="Chromosome 3"/>
</dbReference>
<dbReference type="Bgee" id="ENSRNOG00000028908">
    <property type="expression patterns" value="Expressed in testis and 7 other cell types or tissues"/>
</dbReference>
<dbReference type="GO" id="GO:0001669">
    <property type="term" value="C:acrosomal vesicle"/>
    <property type="evidence" value="ECO:0000266"/>
    <property type="project" value="RGD"/>
</dbReference>
<dbReference type="GO" id="GO:0009986">
    <property type="term" value="C:cell surface"/>
    <property type="evidence" value="ECO:0000266"/>
    <property type="project" value="RGD"/>
</dbReference>
<dbReference type="GO" id="GO:0005737">
    <property type="term" value="C:cytoplasm"/>
    <property type="evidence" value="ECO:0000266"/>
    <property type="project" value="RGD"/>
</dbReference>
<dbReference type="GO" id="GO:0005615">
    <property type="term" value="C:extracellular space"/>
    <property type="evidence" value="ECO:0000266"/>
    <property type="project" value="RGD"/>
</dbReference>
<dbReference type="GO" id="GO:0032991">
    <property type="term" value="C:protein-containing complex"/>
    <property type="evidence" value="ECO:0000266"/>
    <property type="project" value="RGD"/>
</dbReference>
<dbReference type="GO" id="GO:0004867">
    <property type="term" value="F:serine-type endopeptidase inhibitor activity"/>
    <property type="evidence" value="ECO:0007669"/>
    <property type="project" value="UniProtKB-KW"/>
</dbReference>
<dbReference type="GO" id="GO:0042742">
    <property type="term" value="P:defense response to bacterium"/>
    <property type="evidence" value="ECO:0000250"/>
    <property type="project" value="UniProtKB"/>
</dbReference>
<dbReference type="GO" id="GO:0090281">
    <property type="term" value="P:negative regulation of calcium ion import"/>
    <property type="evidence" value="ECO:0000266"/>
    <property type="project" value="RGD"/>
</dbReference>
<dbReference type="GO" id="GO:1901318">
    <property type="term" value="P:negative regulation of flagellated sperm motility"/>
    <property type="evidence" value="ECO:0000266"/>
    <property type="project" value="RGD"/>
</dbReference>
<dbReference type="GO" id="GO:0010466">
    <property type="term" value="P:negative regulation of peptidase activity"/>
    <property type="evidence" value="ECO:0000250"/>
    <property type="project" value="UniProtKB"/>
</dbReference>
<dbReference type="CDD" id="cd22611">
    <property type="entry name" value="Kunitz_eppin"/>
    <property type="match status" value="1"/>
</dbReference>
<dbReference type="FunFam" id="4.10.410.10:FF:000015">
    <property type="entry name" value="WAP four-disulfide core domain 6A"/>
    <property type="match status" value="1"/>
</dbReference>
<dbReference type="FunFam" id="4.10.75.10:FF:000004">
    <property type="entry name" value="WAP four-disulfide core domain 6A"/>
    <property type="match status" value="1"/>
</dbReference>
<dbReference type="Gene3D" id="4.10.75.10">
    <property type="entry name" value="Elafin-like"/>
    <property type="match status" value="1"/>
</dbReference>
<dbReference type="Gene3D" id="4.10.410.10">
    <property type="entry name" value="Pancreatic trypsin inhibitor Kunitz domain"/>
    <property type="match status" value="1"/>
</dbReference>
<dbReference type="InterPro" id="IPR036645">
    <property type="entry name" value="Elafin-like_sf"/>
</dbReference>
<dbReference type="InterPro" id="IPR002223">
    <property type="entry name" value="Kunitz_BPTI"/>
</dbReference>
<dbReference type="InterPro" id="IPR036880">
    <property type="entry name" value="Kunitz_BPTI_sf"/>
</dbReference>
<dbReference type="InterPro" id="IPR020901">
    <property type="entry name" value="Prtase_inh_Kunz-CS"/>
</dbReference>
<dbReference type="InterPro" id="IPR051388">
    <property type="entry name" value="Serpin_venom_toxin"/>
</dbReference>
<dbReference type="InterPro" id="IPR008197">
    <property type="entry name" value="WAP_dom"/>
</dbReference>
<dbReference type="PANTHER" id="PTHR46751">
    <property type="entry name" value="EPPIN"/>
    <property type="match status" value="1"/>
</dbReference>
<dbReference type="PANTHER" id="PTHR46751:SF2">
    <property type="entry name" value="EPPIN"/>
    <property type="match status" value="1"/>
</dbReference>
<dbReference type="Pfam" id="PF00014">
    <property type="entry name" value="Kunitz_BPTI"/>
    <property type="match status" value="1"/>
</dbReference>
<dbReference type="Pfam" id="PF00095">
    <property type="entry name" value="WAP"/>
    <property type="match status" value="1"/>
</dbReference>
<dbReference type="PRINTS" id="PR00759">
    <property type="entry name" value="BASICPTASE"/>
</dbReference>
<dbReference type="SMART" id="SM00131">
    <property type="entry name" value="KU"/>
    <property type="match status" value="1"/>
</dbReference>
<dbReference type="SMART" id="SM00217">
    <property type="entry name" value="WAP"/>
    <property type="match status" value="1"/>
</dbReference>
<dbReference type="SUPFAM" id="SSF57362">
    <property type="entry name" value="BPTI-like"/>
    <property type="match status" value="1"/>
</dbReference>
<dbReference type="SUPFAM" id="SSF57256">
    <property type="entry name" value="Elafin-like"/>
    <property type="match status" value="1"/>
</dbReference>
<dbReference type="PROSITE" id="PS00280">
    <property type="entry name" value="BPTI_KUNITZ_1"/>
    <property type="match status" value="1"/>
</dbReference>
<dbReference type="PROSITE" id="PS50279">
    <property type="entry name" value="BPTI_KUNITZ_2"/>
    <property type="match status" value="1"/>
</dbReference>
<dbReference type="PROSITE" id="PS51390">
    <property type="entry name" value="WAP"/>
    <property type="match status" value="1"/>
</dbReference>
<keyword id="KW-0929">Antimicrobial</keyword>
<keyword id="KW-1015">Disulfide bond</keyword>
<keyword id="KW-0646">Protease inhibitor</keyword>
<keyword id="KW-1185">Reference proteome</keyword>
<keyword id="KW-0677">Repeat</keyword>
<keyword id="KW-0964">Secreted</keyword>
<keyword id="KW-0722">Serine protease inhibitor</keyword>
<keyword id="KW-0732">Signal</keyword>
<name>EPPI_RAT</name>
<sequence>MKFSRFVSILVLFGLLTKVQGPSLTDFLFPRRCPRFREECEHRERDLCTRDRDCQKREKCCIFSCGKKCLNPQQDICSLPKDSGYCMAYFPRWWYNKKNGTCQLFIYGGCQGNNNNFQSQSICQNACEKKSNST</sequence>
<accession>D4A2Z2</accession>
<organism>
    <name type="scientific">Rattus norvegicus</name>
    <name type="common">Rat</name>
    <dbReference type="NCBI Taxonomy" id="10116"/>
    <lineage>
        <taxon>Eukaryota</taxon>
        <taxon>Metazoa</taxon>
        <taxon>Chordata</taxon>
        <taxon>Craniata</taxon>
        <taxon>Vertebrata</taxon>
        <taxon>Euteleostomi</taxon>
        <taxon>Mammalia</taxon>
        <taxon>Eutheria</taxon>
        <taxon>Euarchontoglires</taxon>
        <taxon>Glires</taxon>
        <taxon>Rodentia</taxon>
        <taxon>Myomorpha</taxon>
        <taxon>Muroidea</taxon>
        <taxon>Muridae</taxon>
        <taxon>Murinae</taxon>
        <taxon>Rattus</taxon>
    </lineage>
</organism>
<proteinExistence type="inferred from homology"/>
<comment type="function">
    <text evidence="1">Serine protease inhibitor that plays an essential role in male reproduction and fertility. Modulates the hydrolysis of SEMG1 by KLK3/PSA (a serine protease), provides antimicrobial protection for spermatozoa in the ejaculate coagulum, and binds SEMG1 thereby inhibiting sperm motility (By similarity).</text>
</comment>
<comment type="subunit">
    <text evidence="1">Monomer. Homodimer. Homomultimers. Interacts with SEMG1 (via 164-283 AA). Interacts with LTF. Found in a complex with LTF, CLU, EPPIN and SEMG1.</text>
</comment>
<comment type="subcellular location">
    <subcellularLocation>
        <location evidence="5">Secreted</location>
    </subcellularLocation>
</comment>
<reference key="1">
    <citation type="journal article" date="2004" name="Nature">
        <title>Genome sequence of the Brown Norway rat yields insights into mammalian evolution.</title>
        <authorList>
            <person name="Gibbs R.A."/>
            <person name="Weinstock G.M."/>
            <person name="Metzker M.L."/>
            <person name="Muzny D.M."/>
            <person name="Sodergren E.J."/>
            <person name="Scherer S."/>
            <person name="Scott G."/>
            <person name="Steffen D."/>
            <person name="Worley K.C."/>
            <person name="Burch P.E."/>
            <person name="Okwuonu G."/>
            <person name="Hines S."/>
            <person name="Lewis L."/>
            <person name="Deramo C."/>
            <person name="Delgado O."/>
            <person name="Dugan-Rocha S."/>
            <person name="Miner G."/>
            <person name="Morgan M."/>
            <person name="Hawes A."/>
            <person name="Gill R."/>
            <person name="Holt R.A."/>
            <person name="Adams M.D."/>
            <person name="Amanatides P.G."/>
            <person name="Baden-Tillson H."/>
            <person name="Barnstead M."/>
            <person name="Chin S."/>
            <person name="Evans C.A."/>
            <person name="Ferriera S."/>
            <person name="Fosler C."/>
            <person name="Glodek A."/>
            <person name="Gu Z."/>
            <person name="Jennings D."/>
            <person name="Kraft C.L."/>
            <person name="Nguyen T."/>
            <person name="Pfannkoch C.M."/>
            <person name="Sitter C."/>
            <person name="Sutton G.G."/>
            <person name="Venter J.C."/>
            <person name="Woodage T."/>
            <person name="Smith D."/>
            <person name="Lee H.-M."/>
            <person name="Gustafson E."/>
            <person name="Cahill P."/>
            <person name="Kana A."/>
            <person name="Doucette-Stamm L."/>
            <person name="Weinstock K."/>
            <person name="Fechtel K."/>
            <person name="Weiss R.B."/>
            <person name="Dunn D.M."/>
            <person name="Green E.D."/>
            <person name="Blakesley R.W."/>
            <person name="Bouffard G.G."/>
            <person name="De Jong P.J."/>
            <person name="Osoegawa K."/>
            <person name="Zhu B."/>
            <person name="Marra M."/>
            <person name="Schein J."/>
            <person name="Bosdet I."/>
            <person name="Fjell C."/>
            <person name="Jones S."/>
            <person name="Krzywinski M."/>
            <person name="Mathewson C."/>
            <person name="Siddiqui A."/>
            <person name="Wye N."/>
            <person name="McPherson J."/>
            <person name="Zhao S."/>
            <person name="Fraser C.M."/>
            <person name="Shetty J."/>
            <person name="Shatsman S."/>
            <person name="Geer K."/>
            <person name="Chen Y."/>
            <person name="Abramzon S."/>
            <person name="Nierman W.C."/>
            <person name="Havlak P.H."/>
            <person name="Chen R."/>
            <person name="Durbin K.J."/>
            <person name="Egan A."/>
            <person name="Ren Y."/>
            <person name="Song X.-Z."/>
            <person name="Li B."/>
            <person name="Liu Y."/>
            <person name="Qin X."/>
            <person name="Cawley S."/>
            <person name="Cooney A.J."/>
            <person name="D'Souza L.M."/>
            <person name="Martin K."/>
            <person name="Wu J.Q."/>
            <person name="Gonzalez-Garay M.L."/>
            <person name="Jackson A.R."/>
            <person name="Kalafus K.J."/>
            <person name="McLeod M.P."/>
            <person name="Milosavljevic A."/>
            <person name="Virk D."/>
            <person name="Volkov A."/>
            <person name="Wheeler D.A."/>
            <person name="Zhang Z."/>
            <person name="Bailey J.A."/>
            <person name="Eichler E.E."/>
            <person name="Tuzun E."/>
            <person name="Birney E."/>
            <person name="Mongin E."/>
            <person name="Ureta-Vidal A."/>
            <person name="Woodwark C."/>
            <person name="Zdobnov E."/>
            <person name="Bork P."/>
            <person name="Suyama M."/>
            <person name="Torrents D."/>
            <person name="Alexandersson M."/>
            <person name="Trask B.J."/>
            <person name="Young J.M."/>
            <person name="Huang H."/>
            <person name="Wang H."/>
            <person name="Xing H."/>
            <person name="Daniels S."/>
            <person name="Gietzen D."/>
            <person name="Schmidt J."/>
            <person name="Stevens K."/>
            <person name="Vitt U."/>
            <person name="Wingrove J."/>
            <person name="Camara F."/>
            <person name="Mar Alba M."/>
            <person name="Abril J.F."/>
            <person name="Guigo R."/>
            <person name="Smit A."/>
            <person name="Dubchak I."/>
            <person name="Rubin E.M."/>
            <person name="Couronne O."/>
            <person name="Poliakov A."/>
            <person name="Huebner N."/>
            <person name="Ganten D."/>
            <person name="Goesele C."/>
            <person name="Hummel O."/>
            <person name="Kreitler T."/>
            <person name="Lee Y.-A."/>
            <person name="Monti J."/>
            <person name="Schulz H."/>
            <person name="Zimdahl H."/>
            <person name="Himmelbauer H."/>
            <person name="Lehrach H."/>
            <person name="Jacob H.J."/>
            <person name="Bromberg S."/>
            <person name="Gullings-Handley J."/>
            <person name="Jensen-Seaman M.I."/>
            <person name="Kwitek A.E."/>
            <person name="Lazar J."/>
            <person name="Pasko D."/>
            <person name="Tonellato P.J."/>
            <person name="Twigger S."/>
            <person name="Ponting C.P."/>
            <person name="Duarte J.M."/>
            <person name="Rice S."/>
            <person name="Goodstadt L."/>
            <person name="Beatson S.A."/>
            <person name="Emes R.D."/>
            <person name="Winter E.E."/>
            <person name="Webber C."/>
            <person name="Brandt P."/>
            <person name="Nyakatura G."/>
            <person name="Adetobi M."/>
            <person name="Chiaromonte F."/>
            <person name="Elnitski L."/>
            <person name="Eswara P."/>
            <person name="Hardison R.C."/>
            <person name="Hou M."/>
            <person name="Kolbe D."/>
            <person name="Makova K."/>
            <person name="Miller W."/>
            <person name="Nekrutenko A."/>
            <person name="Riemer C."/>
            <person name="Schwartz S."/>
            <person name="Taylor J."/>
            <person name="Yang S."/>
            <person name="Zhang Y."/>
            <person name="Lindpaintner K."/>
            <person name="Andrews T.D."/>
            <person name="Caccamo M."/>
            <person name="Clamp M."/>
            <person name="Clarke L."/>
            <person name="Curwen V."/>
            <person name="Durbin R.M."/>
            <person name="Eyras E."/>
            <person name="Searle S.M."/>
            <person name="Cooper G.M."/>
            <person name="Batzoglou S."/>
            <person name="Brudno M."/>
            <person name="Sidow A."/>
            <person name="Stone E.A."/>
            <person name="Payseur B.A."/>
            <person name="Bourque G."/>
            <person name="Lopez-Otin C."/>
            <person name="Puente X.S."/>
            <person name="Chakrabarti K."/>
            <person name="Chatterji S."/>
            <person name="Dewey C."/>
            <person name="Pachter L."/>
            <person name="Bray N."/>
            <person name="Yap V.B."/>
            <person name="Caspi A."/>
            <person name="Tesler G."/>
            <person name="Pevzner P.A."/>
            <person name="Haussler D."/>
            <person name="Roskin K.M."/>
            <person name="Baertsch R."/>
            <person name="Clawson H."/>
            <person name="Furey T.S."/>
            <person name="Hinrichs A.S."/>
            <person name="Karolchik D."/>
            <person name="Kent W.J."/>
            <person name="Rosenbloom K.R."/>
            <person name="Trumbower H."/>
            <person name="Weirauch M."/>
            <person name="Cooper D.N."/>
            <person name="Stenson P.D."/>
            <person name="Ma B."/>
            <person name="Brent M."/>
            <person name="Arumugam M."/>
            <person name="Shteynberg D."/>
            <person name="Copley R.R."/>
            <person name="Taylor M.S."/>
            <person name="Riethman H."/>
            <person name="Mudunuri U."/>
            <person name="Peterson J."/>
            <person name="Guyer M."/>
            <person name="Felsenfeld A."/>
            <person name="Old S."/>
            <person name="Mockrin S."/>
            <person name="Collins F.S."/>
        </authorList>
    </citation>
    <scope>NUCLEOTIDE SEQUENCE [LARGE SCALE GENOMIC DNA]</scope>
    <source>
        <strain>Brown Norway</strain>
    </source>
</reference>
<reference key="2">
    <citation type="submission" date="2005-09" db="EMBL/GenBank/DDBJ databases">
        <authorList>
            <person name="Mural R.J."/>
            <person name="Adams M.D."/>
            <person name="Myers E.W."/>
            <person name="Smith H.O."/>
            <person name="Venter J.C."/>
        </authorList>
    </citation>
    <scope>NUCLEOTIDE SEQUENCE [LARGE SCALE GENOMIC DNA]</scope>
    <source>
        <strain>Brown Norway</strain>
    </source>
</reference>